<accession>Q6Z2X3</accession>
<accession>A0A0P0VEK5</accession>
<accession>A3A304</accession>
<keyword id="KW-0963">Cytoplasm</keyword>
<keyword id="KW-0501">Molybdenum cofactor biosynthesis</keyword>
<keyword id="KW-1185">Reference proteome</keyword>
<keyword id="KW-0808">Transferase</keyword>
<organism>
    <name type="scientific">Oryza sativa subsp. japonica</name>
    <name type="common">Rice</name>
    <dbReference type="NCBI Taxonomy" id="39947"/>
    <lineage>
        <taxon>Eukaryota</taxon>
        <taxon>Viridiplantae</taxon>
        <taxon>Streptophyta</taxon>
        <taxon>Embryophyta</taxon>
        <taxon>Tracheophyta</taxon>
        <taxon>Spermatophyta</taxon>
        <taxon>Magnoliopsida</taxon>
        <taxon>Liliopsida</taxon>
        <taxon>Poales</taxon>
        <taxon>Poaceae</taxon>
        <taxon>BOP clade</taxon>
        <taxon>Oryzoideae</taxon>
        <taxon>Oryzeae</taxon>
        <taxon>Oryzinae</taxon>
        <taxon>Oryza</taxon>
        <taxon>Oryza sativa</taxon>
    </lineage>
</organism>
<evidence type="ECO:0000255" key="1">
    <source>
        <dbReference type="HAMAP-Rule" id="MF_03052"/>
    </source>
</evidence>
<evidence type="ECO:0000256" key="2">
    <source>
        <dbReference type="SAM" id="MobiDB-lite"/>
    </source>
</evidence>
<evidence type="ECO:0000305" key="3"/>
<reference key="1">
    <citation type="journal article" date="2005" name="Nature">
        <title>The map-based sequence of the rice genome.</title>
        <authorList>
            <consortium name="International rice genome sequencing project (IRGSP)"/>
        </authorList>
    </citation>
    <scope>NUCLEOTIDE SEQUENCE [LARGE SCALE GENOMIC DNA]</scope>
    <source>
        <strain>cv. Nipponbare</strain>
    </source>
</reference>
<reference key="2">
    <citation type="journal article" date="2008" name="Nucleic Acids Res.">
        <title>The rice annotation project database (RAP-DB): 2008 update.</title>
        <authorList>
            <consortium name="The rice annotation project (RAP)"/>
        </authorList>
    </citation>
    <scope>GENOME REANNOTATION</scope>
    <source>
        <strain>cv. Nipponbare</strain>
    </source>
</reference>
<reference key="3">
    <citation type="journal article" date="2013" name="Rice">
        <title>Improvement of the Oryza sativa Nipponbare reference genome using next generation sequence and optical map data.</title>
        <authorList>
            <person name="Kawahara Y."/>
            <person name="de la Bastide M."/>
            <person name="Hamilton J.P."/>
            <person name="Kanamori H."/>
            <person name="McCombie W.R."/>
            <person name="Ouyang S."/>
            <person name="Schwartz D.C."/>
            <person name="Tanaka T."/>
            <person name="Wu J."/>
            <person name="Zhou S."/>
            <person name="Childs K.L."/>
            <person name="Davidson R.M."/>
            <person name="Lin H."/>
            <person name="Quesada-Ocampo L."/>
            <person name="Vaillancourt B."/>
            <person name="Sakai H."/>
            <person name="Lee S.S."/>
            <person name="Kim J."/>
            <person name="Numa H."/>
            <person name="Itoh T."/>
            <person name="Buell C.R."/>
            <person name="Matsumoto T."/>
        </authorList>
    </citation>
    <scope>GENOME REANNOTATION</scope>
    <source>
        <strain>cv. Nipponbare</strain>
    </source>
</reference>
<reference key="4">
    <citation type="journal article" date="2005" name="PLoS Biol.">
        <title>The genomes of Oryza sativa: a history of duplications.</title>
        <authorList>
            <person name="Yu J."/>
            <person name="Wang J."/>
            <person name="Lin W."/>
            <person name="Li S."/>
            <person name="Li H."/>
            <person name="Zhou J."/>
            <person name="Ni P."/>
            <person name="Dong W."/>
            <person name="Hu S."/>
            <person name="Zeng C."/>
            <person name="Zhang J."/>
            <person name="Zhang Y."/>
            <person name="Li R."/>
            <person name="Xu Z."/>
            <person name="Li S."/>
            <person name="Li X."/>
            <person name="Zheng H."/>
            <person name="Cong L."/>
            <person name="Lin L."/>
            <person name="Yin J."/>
            <person name="Geng J."/>
            <person name="Li G."/>
            <person name="Shi J."/>
            <person name="Liu J."/>
            <person name="Lv H."/>
            <person name="Li J."/>
            <person name="Wang J."/>
            <person name="Deng Y."/>
            <person name="Ran L."/>
            <person name="Shi X."/>
            <person name="Wang X."/>
            <person name="Wu Q."/>
            <person name="Li C."/>
            <person name="Ren X."/>
            <person name="Wang J."/>
            <person name="Wang X."/>
            <person name="Li D."/>
            <person name="Liu D."/>
            <person name="Zhang X."/>
            <person name="Ji Z."/>
            <person name="Zhao W."/>
            <person name="Sun Y."/>
            <person name="Zhang Z."/>
            <person name="Bao J."/>
            <person name="Han Y."/>
            <person name="Dong L."/>
            <person name="Ji J."/>
            <person name="Chen P."/>
            <person name="Wu S."/>
            <person name="Liu J."/>
            <person name="Xiao Y."/>
            <person name="Bu D."/>
            <person name="Tan J."/>
            <person name="Yang L."/>
            <person name="Ye C."/>
            <person name="Zhang J."/>
            <person name="Xu J."/>
            <person name="Zhou Y."/>
            <person name="Yu Y."/>
            <person name="Zhang B."/>
            <person name="Zhuang S."/>
            <person name="Wei H."/>
            <person name="Liu B."/>
            <person name="Lei M."/>
            <person name="Yu H."/>
            <person name="Li Y."/>
            <person name="Xu H."/>
            <person name="Wei S."/>
            <person name="He X."/>
            <person name="Fang L."/>
            <person name="Zhang Z."/>
            <person name="Zhang Y."/>
            <person name="Huang X."/>
            <person name="Su Z."/>
            <person name="Tong W."/>
            <person name="Li J."/>
            <person name="Tong Z."/>
            <person name="Li S."/>
            <person name="Ye J."/>
            <person name="Wang L."/>
            <person name="Fang L."/>
            <person name="Lei T."/>
            <person name="Chen C.-S."/>
            <person name="Chen H.-C."/>
            <person name="Xu Z."/>
            <person name="Li H."/>
            <person name="Huang H."/>
            <person name="Zhang F."/>
            <person name="Xu H."/>
            <person name="Li N."/>
            <person name="Zhao C."/>
            <person name="Li S."/>
            <person name="Dong L."/>
            <person name="Huang Y."/>
            <person name="Li L."/>
            <person name="Xi Y."/>
            <person name="Qi Q."/>
            <person name="Li W."/>
            <person name="Zhang B."/>
            <person name="Hu W."/>
            <person name="Zhang Y."/>
            <person name="Tian X."/>
            <person name="Jiao Y."/>
            <person name="Liang X."/>
            <person name="Jin J."/>
            <person name="Gao L."/>
            <person name="Zheng W."/>
            <person name="Hao B."/>
            <person name="Liu S.-M."/>
            <person name="Wang W."/>
            <person name="Yuan L."/>
            <person name="Cao M."/>
            <person name="McDermott J."/>
            <person name="Samudrala R."/>
            <person name="Wang J."/>
            <person name="Wong G.K.-S."/>
            <person name="Yang H."/>
        </authorList>
    </citation>
    <scope>NUCLEOTIDE SEQUENCE [LARGE SCALE GENOMIC DNA]</scope>
    <source>
        <strain>cv. Nipponbare</strain>
    </source>
</reference>
<reference key="5">
    <citation type="submission" date="2006-10" db="EMBL/GenBank/DDBJ databases">
        <title>Oryza sativa full length cDNA.</title>
        <authorList>
            <consortium name="The rice full-length cDNA consortium"/>
        </authorList>
    </citation>
    <scope>NUCLEOTIDE SEQUENCE [LARGE SCALE MRNA]</scope>
    <source>
        <strain>cv. Nipponbare</strain>
    </source>
</reference>
<name>MOC2B_ORYSJ</name>
<comment type="function">
    <text evidence="1">Catalytic subunit of the molybdopterin synthase complex, a complex that catalyzes the conversion of precursor Z into molybdopterin. Acts by mediating the incorporation of 2 sulfur atoms from thiocarboxylated MOCS2A into precursor Z to generate a dithiolene group.</text>
</comment>
<comment type="catalytic activity">
    <reaction evidence="1">
        <text>2 [molybdopterin-synthase sulfur-carrier protein]-C-terminal-Gly-aminoethanethioate + cyclic pyranopterin phosphate + H2O = molybdopterin + 2 [molybdopterin-synthase sulfur-carrier protein]-C-terminal Gly-Gly + 2 H(+)</text>
        <dbReference type="Rhea" id="RHEA:26333"/>
        <dbReference type="Rhea" id="RHEA-COMP:12202"/>
        <dbReference type="Rhea" id="RHEA-COMP:19907"/>
        <dbReference type="ChEBI" id="CHEBI:15377"/>
        <dbReference type="ChEBI" id="CHEBI:15378"/>
        <dbReference type="ChEBI" id="CHEBI:58698"/>
        <dbReference type="ChEBI" id="CHEBI:59648"/>
        <dbReference type="ChEBI" id="CHEBI:90778"/>
        <dbReference type="ChEBI" id="CHEBI:232372"/>
        <dbReference type="EC" id="2.8.1.12"/>
    </reaction>
</comment>
<comment type="pathway">
    <text evidence="1">Cofactor biosynthesis; molybdopterin biosynthesis.</text>
</comment>
<comment type="subunit">
    <text evidence="1">Heterotetramer; composed of 2 small (MOCS2A) and 2 large (MOCS2B) subunits.</text>
</comment>
<comment type="subcellular location">
    <subcellularLocation>
        <location evidence="1">Cytoplasm</location>
    </subcellularLocation>
</comment>
<comment type="similarity">
    <text evidence="1">Belongs to the MoaE family. MOCS2B subfamily.</text>
</comment>
<feature type="chain" id="PRO_0000369347" description="Molybdopterin synthase catalytic subunit">
    <location>
        <begin position="1"/>
        <end position="193"/>
    </location>
</feature>
<feature type="region of interest" description="Disordered" evidence="2">
    <location>
        <begin position="159"/>
        <end position="193"/>
    </location>
</feature>
<feature type="compositionally biased region" description="Low complexity" evidence="2">
    <location>
        <begin position="163"/>
        <end position="178"/>
    </location>
</feature>
<feature type="binding site" evidence="1">
    <location>
        <begin position="118"/>
        <end position="119"/>
    </location>
    <ligand>
        <name>substrate</name>
    </ligand>
</feature>
<feature type="binding site" evidence="1">
    <location>
        <position position="134"/>
    </location>
    <ligand>
        <name>substrate</name>
    </ligand>
</feature>
<feature type="binding site" evidence="1">
    <location>
        <begin position="141"/>
        <end position="143"/>
    </location>
    <ligand>
        <name>substrate</name>
    </ligand>
</feature>
<feature type="sequence conflict" description="In Ref. 4; EAZ21693." evidence="3" ref="4">
    <original>S</original>
    <variation>F</variation>
    <location>
        <position position="115"/>
    </location>
</feature>
<sequence>MASDELPVAAAATEEEDLVEILDEGSGRLDIARYVDHVRDLAAGAIATFEGTTRDSFEGRRVVELRYEAYGAMARRRLAAILREARAAHSLRRLAVAHRLGTVPAGEASVFVAASAVHRADAMEACRYVIDEVKASVPIWKKEVYDDGEVWKENREFLDRTTTDGTTASSPAPATRPAKGGGCCGRKVRVNES</sequence>
<protein>
    <recommendedName>
        <fullName evidence="1">Molybdopterin synthase catalytic subunit</fullName>
        <ecNumber evidence="1">2.8.1.12</ecNumber>
    </recommendedName>
    <alternativeName>
        <fullName evidence="1">Molybdenum cofactor synthesis protein 2 large subunit</fullName>
    </alternativeName>
    <alternativeName>
        <fullName evidence="1">Molybdenum cofactor synthesis protein 2B</fullName>
        <shortName evidence="1">MOCS2B</shortName>
    </alternativeName>
</protein>
<dbReference type="EC" id="2.8.1.12" evidence="1"/>
<dbReference type="EMBL" id="AP005294">
    <property type="protein sequence ID" value="BAD10257.1"/>
    <property type="molecule type" value="Genomic_DNA"/>
</dbReference>
<dbReference type="EMBL" id="AP008208">
    <property type="protein sequence ID" value="BAF07766.1"/>
    <property type="molecule type" value="Genomic_DNA"/>
</dbReference>
<dbReference type="EMBL" id="AP014958">
    <property type="protein sequence ID" value="BAS76915.1"/>
    <property type="molecule type" value="Genomic_DNA"/>
</dbReference>
<dbReference type="EMBL" id="CM000139">
    <property type="protein sequence ID" value="EAZ21693.1"/>
    <property type="molecule type" value="Genomic_DNA"/>
</dbReference>
<dbReference type="EMBL" id="AK243315">
    <property type="protein sequence ID" value="BAH01534.1"/>
    <property type="molecule type" value="mRNA"/>
</dbReference>
<dbReference type="RefSeq" id="XP_015623913.1">
    <property type="nucleotide sequence ID" value="XM_015768427.1"/>
</dbReference>
<dbReference type="SMR" id="Q6Z2X3"/>
<dbReference type="FunCoup" id="Q6Z2X3">
    <property type="interactions" value="1165"/>
</dbReference>
<dbReference type="STRING" id="39947.Q6Z2X3"/>
<dbReference type="PaxDb" id="39947-Q6Z2X3"/>
<dbReference type="EnsemblPlants" id="Os02t0140300-01">
    <property type="protein sequence ID" value="Os02t0140300-01"/>
    <property type="gene ID" value="Os02g0140300"/>
</dbReference>
<dbReference type="Gramene" id="Os02t0140300-01">
    <property type="protein sequence ID" value="Os02t0140300-01"/>
    <property type="gene ID" value="Os02g0140300"/>
</dbReference>
<dbReference type="KEGG" id="dosa:Os02g0140300"/>
<dbReference type="eggNOG" id="KOG3307">
    <property type="taxonomic scope" value="Eukaryota"/>
</dbReference>
<dbReference type="HOGENOM" id="CLU_089568_0_0_1"/>
<dbReference type="InParanoid" id="Q6Z2X3"/>
<dbReference type="OMA" id="HERKSCC"/>
<dbReference type="OrthoDB" id="5531344at2759"/>
<dbReference type="UniPathway" id="UPA00344"/>
<dbReference type="Proteomes" id="UP000000763">
    <property type="component" value="Chromosome 2"/>
</dbReference>
<dbReference type="Proteomes" id="UP000007752">
    <property type="component" value="Chromosome 2"/>
</dbReference>
<dbReference type="Proteomes" id="UP000059680">
    <property type="component" value="Chromosome 2"/>
</dbReference>
<dbReference type="GO" id="GO:0005829">
    <property type="term" value="C:cytosol"/>
    <property type="evidence" value="ECO:0000318"/>
    <property type="project" value="GO_Central"/>
</dbReference>
<dbReference type="GO" id="GO:1990140">
    <property type="term" value="C:molybdopterin synthase complex"/>
    <property type="evidence" value="ECO:0000250"/>
    <property type="project" value="UniProtKB"/>
</dbReference>
<dbReference type="GO" id="GO:0030366">
    <property type="term" value="F:molybdopterin synthase activity"/>
    <property type="evidence" value="ECO:0007669"/>
    <property type="project" value="UniProtKB-UniRule"/>
</dbReference>
<dbReference type="GO" id="GO:0006777">
    <property type="term" value="P:Mo-molybdopterin cofactor biosynthetic process"/>
    <property type="evidence" value="ECO:0000250"/>
    <property type="project" value="UniProtKB"/>
</dbReference>
<dbReference type="CDD" id="cd00756">
    <property type="entry name" value="MoaE"/>
    <property type="match status" value="1"/>
</dbReference>
<dbReference type="FunFam" id="3.90.1170.40:FF:000002">
    <property type="entry name" value="Molybdopterin synthase catalytic subunit"/>
    <property type="match status" value="1"/>
</dbReference>
<dbReference type="Gene3D" id="3.90.1170.40">
    <property type="entry name" value="Molybdopterin biosynthesis MoaE subunit"/>
    <property type="match status" value="1"/>
</dbReference>
<dbReference type="HAMAP" id="MF_03052">
    <property type="entry name" value="MOC2B"/>
    <property type="match status" value="1"/>
</dbReference>
<dbReference type="InterPro" id="IPR036563">
    <property type="entry name" value="MoaE_sf"/>
</dbReference>
<dbReference type="InterPro" id="IPR028888">
    <property type="entry name" value="MOCS2B_euk"/>
</dbReference>
<dbReference type="InterPro" id="IPR003448">
    <property type="entry name" value="Mopterin_biosynth_MoaE"/>
</dbReference>
<dbReference type="PANTHER" id="PTHR23404">
    <property type="entry name" value="MOLYBDOPTERIN SYNTHASE RELATED"/>
    <property type="match status" value="1"/>
</dbReference>
<dbReference type="Pfam" id="PF02391">
    <property type="entry name" value="MoaE"/>
    <property type="match status" value="1"/>
</dbReference>
<dbReference type="SUPFAM" id="SSF54690">
    <property type="entry name" value="Molybdopterin synthase subunit MoaE"/>
    <property type="match status" value="1"/>
</dbReference>
<proteinExistence type="evidence at transcript level"/>
<gene>
    <name evidence="1" type="primary">MOCS2</name>
    <name type="ordered locus">Os02g0140300</name>
    <name type="ordered locus">LOC_Os02g04740</name>
    <name type="ORF">OJ1679_B08.15</name>
    <name type="ORF">OsJ_005176</name>
</gene>